<feature type="chain" id="PRO_0000453874" description="Short chain dehydrogenase ausX">
    <location>
        <begin position="1"/>
        <end position="259"/>
    </location>
</feature>
<feature type="active site" description="Proton acceptor" evidence="4">
    <location>
        <position position="153"/>
    </location>
</feature>
<feature type="active site" description="Proton donor" evidence="2">
    <location>
        <position position="153"/>
    </location>
</feature>
<feature type="active site" description="Lowers pKa of active site Tyr" evidence="2">
    <location>
        <position position="157"/>
    </location>
</feature>
<feature type="binding site" evidence="1">
    <location>
        <position position="13"/>
    </location>
    <ligand>
        <name>NADP(+)</name>
        <dbReference type="ChEBI" id="CHEBI:58349"/>
    </ligand>
</feature>
<feature type="binding site" evidence="1">
    <location>
        <position position="59"/>
    </location>
    <ligand>
        <name>NADP(+)</name>
        <dbReference type="ChEBI" id="CHEBI:58349"/>
    </ligand>
</feature>
<feature type="binding site" evidence="1">
    <location>
        <position position="121"/>
    </location>
    <ligand>
        <name>NADP(+)</name>
        <dbReference type="ChEBI" id="CHEBI:58349"/>
    </ligand>
</feature>
<feature type="binding site" evidence="2">
    <location>
        <position position="153"/>
    </location>
    <ligand>
        <name>NADP(+)</name>
        <dbReference type="ChEBI" id="CHEBI:58349"/>
    </ligand>
</feature>
<feature type="binding site" evidence="2">
    <location>
        <position position="157"/>
    </location>
    <ligand>
        <name>NADP(+)</name>
        <dbReference type="ChEBI" id="CHEBI:58349"/>
    </ligand>
</feature>
<feature type="binding site" evidence="2">
    <location>
        <position position="186"/>
    </location>
    <ligand>
        <name>NADP(+)</name>
        <dbReference type="ChEBI" id="CHEBI:58349"/>
    </ligand>
</feature>
<evidence type="ECO:0000250" key="1">
    <source>
        <dbReference type="UniProtKB" id="L0E2Z4"/>
    </source>
</evidence>
<evidence type="ECO:0000250" key="2">
    <source>
        <dbReference type="UniProtKB" id="O93868"/>
    </source>
</evidence>
<evidence type="ECO:0000250" key="3">
    <source>
        <dbReference type="UniProtKB" id="P9WEP2"/>
    </source>
</evidence>
<evidence type="ECO:0000255" key="4">
    <source>
        <dbReference type="PROSITE-ProRule" id="PRU10001"/>
    </source>
</evidence>
<evidence type="ECO:0000269" key="5">
    <source>
    </source>
</evidence>
<evidence type="ECO:0000303" key="6">
    <source>
    </source>
</evidence>
<evidence type="ECO:0000305" key="7"/>
<evidence type="ECO:0000305" key="8">
    <source>
    </source>
</evidence>
<reference key="1">
    <citation type="journal article" date="2015" name="Genome Announc.">
        <title>Draft genome sequence of the fungus Penicillium brasilianum MG11.</title>
        <authorList>
            <person name="Horn F."/>
            <person name="Linde J."/>
            <person name="Mattern D.J."/>
            <person name="Walther G."/>
            <person name="Guthke R."/>
            <person name="Brakhage A.A."/>
            <person name="Valiante V."/>
        </authorList>
    </citation>
    <scope>NUCLEOTIDE SEQUENCE [LARGE SCALE GENOMIC DNA]</scope>
    <source>
        <strain>MG11</strain>
    </source>
</reference>
<reference key="2">
    <citation type="journal article" date="2016" name="J. Am. Chem. Soc.">
        <title>Discovery of key dioxygenases that diverged the paraherquonin and acetoxydehydroaustin pathways in Penicillium brasilianum.</title>
        <authorList>
            <person name="Matsuda Y."/>
            <person name="Iwabuchi T."/>
            <person name="Fujimoto T."/>
            <person name="Awakawa T."/>
            <person name="Nakashima Y."/>
            <person name="Mori T."/>
            <person name="Zhang H."/>
            <person name="Hayashi F."/>
            <person name="Abe I."/>
        </authorList>
    </citation>
    <scope>FUNCTION</scope>
</reference>
<reference key="3">
    <citation type="journal article" date="2017" name="ACS Chem. Biol.">
        <title>Rewiring of the austinoid biosynthetic pathway in filamentous fungi.</title>
        <authorList>
            <person name="Mattern D.J."/>
            <person name="Valiante V."/>
            <person name="Horn F."/>
            <person name="Petzke L."/>
            <person name="Brakhage A.A."/>
        </authorList>
    </citation>
    <scope>FUNCTION</scope>
</reference>
<proteinExistence type="inferred from homology"/>
<protein>
    <recommendedName>
        <fullName evidence="6">Short chain dehydrogenase ausX</fullName>
        <ecNumber evidence="8">1.1.1.-</ecNumber>
    </recommendedName>
    <alternativeName>
        <fullName evidence="6">Austinoid biosynthesis clusters protein X</fullName>
    </alternativeName>
</protein>
<keyword id="KW-0521">NADP</keyword>
<keyword id="KW-0560">Oxidoreductase</keyword>
<keyword id="KW-1185">Reference proteome</keyword>
<organism>
    <name type="scientific">Penicillium brasilianum</name>
    <dbReference type="NCBI Taxonomy" id="104259"/>
    <lineage>
        <taxon>Eukaryota</taxon>
        <taxon>Fungi</taxon>
        <taxon>Dikarya</taxon>
        <taxon>Ascomycota</taxon>
        <taxon>Pezizomycotina</taxon>
        <taxon>Eurotiomycetes</taxon>
        <taxon>Eurotiomycetidae</taxon>
        <taxon>Eurotiales</taxon>
        <taxon>Aspergillaceae</taxon>
        <taxon>Penicillium</taxon>
    </lineage>
</organism>
<dbReference type="EC" id="1.1.1.-" evidence="8"/>
<dbReference type="EMBL" id="CDHK01000010">
    <property type="protein sequence ID" value="CEJ61317.1"/>
    <property type="molecule type" value="Genomic_DNA"/>
</dbReference>
<dbReference type="SMR" id="A0A0F7U1Z1"/>
<dbReference type="STRING" id="104259.A0A0F7U1Z1"/>
<dbReference type="OrthoDB" id="37659at2759"/>
<dbReference type="UniPathway" id="UPA00213"/>
<dbReference type="Proteomes" id="UP000042958">
    <property type="component" value="Unassembled WGS sequence"/>
</dbReference>
<dbReference type="GO" id="GO:0016491">
    <property type="term" value="F:oxidoreductase activity"/>
    <property type="evidence" value="ECO:0007669"/>
    <property type="project" value="UniProtKB-KW"/>
</dbReference>
<dbReference type="GO" id="GO:0016114">
    <property type="term" value="P:terpenoid biosynthetic process"/>
    <property type="evidence" value="ECO:0007669"/>
    <property type="project" value="UniProtKB-UniPathway"/>
</dbReference>
<dbReference type="CDD" id="cd05233">
    <property type="entry name" value="SDR_c"/>
    <property type="match status" value="1"/>
</dbReference>
<dbReference type="FunFam" id="3.40.50.720:FF:000084">
    <property type="entry name" value="Short-chain dehydrogenase reductase"/>
    <property type="match status" value="1"/>
</dbReference>
<dbReference type="Gene3D" id="3.40.50.720">
    <property type="entry name" value="NAD(P)-binding Rossmann-like Domain"/>
    <property type="match status" value="1"/>
</dbReference>
<dbReference type="InterPro" id="IPR036291">
    <property type="entry name" value="NAD(P)-bd_dom_sf"/>
</dbReference>
<dbReference type="InterPro" id="IPR002347">
    <property type="entry name" value="SDR_fam"/>
</dbReference>
<dbReference type="InterPro" id="IPR051122">
    <property type="entry name" value="SDR_superfamily_enzyme"/>
</dbReference>
<dbReference type="PANTHER" id="PTHR43477">
    <property type="entry name" value="DIHYDROANTICAPSIN 7-DEHYDROGENASE"/>
    <property type="match status" value="1"/>
</dbReference>
<dbReference type="PANTHER" id="PTHR43477:SF1">
    <property type="entry name" value="DIHYDROANTICAPSIN 7-DEHYDROGENASE"/>
    <property type="match status" value="1"/>
</dbReference>
<dbReference type="Pfam" id="PF00106">
    <property type="entry name" value="adh_short"/>
    <property type="match status" value="1"/>
</dbReference>
<dbReference type="PRINTS" id="PR00081">
    <property type="entry name" value="GDHRDH"/>
</dbReference>
<dbReference type="PRINTS" id="PR00080">
    <property type="entry name" value="SDRFAMILY"/>
</dbReference>
<dbReference type="SUPFAM" id="SSF51735">
    <property type="entry name" value="NAD(P)-binding Rossmann-fold domains"/>
    <property type="match status" value="1"/>
</dbReference>
<sequence>MTMYNIQDHVVIITGSSSGIGLAASTLALASGAKVLGIDISNSPASLTANPNYTFFAADLSHPESAKKAIAACIAAYGNRIDGLLNIAGVMDLNQSADTVTDDMWDRCIAINLTAPVKLMREVIPIMRLRGKGSIVNVGSKASMSGAVSGVAYTASKHGLVGATKNVAWRFKHEGIRCNIVCPGGVAATGIRDGVDSTQFDSEAMEMMTVIHQAHASDHAKGLGLQPEDLAHSLLYFLSDLSKGISGAVIPVDNAWSTI</sequence>
<accession>A0A0F7U1Z1</accession>
<name>AUSX_PENBI</name>
<gene>
    <name evidence="6" type="primary">ausX</name>
    <name type="ORF">PMG11_09853</name>
</gene>
<comment type="function">
    <text evidence="3 5">Short chain dehydrogenase; part of the gene cluster A that mediates the biosynthesis of the fungal meroterpenoid acetoxydehydroaustin (PubMed:29076725). The first step of the pathway is the synthesis of 3,5-dimethylorsellinic acid by the polyketide synthase ausA (By similarity). 3,5-dimethylorsellinic acid is then prenylated by the polyprenyl transferase ausN (By similarity). Further epoxidation by the FAD-dependent monooxygenase ausM and cyclization by the probable terpene cyclase ausL lead to the formation of protoaustinoid A (By similarity). Protoaustinoid A is then oxidized to spiro-lactone preaustinoid A3 by the combined action of the FAD-binding monooxygenases ausB and ausC, and the dioxygenase ausE (By similarity). Acid-catalyzed keto-rearrangement and ring contraction of the tetraketide portion of preaustinoid A3 by ausJ lead to the formation of preaustinoid A4 (By similarity). The aldo-keto reductase ausK, with the help of ausH, is involved in the next step by transforming preaustinoid A4 into isoaustinone which is in turn hydroxylated by the P450 monooxygenase ausI to form austinolide (By similarity). The cytochrome P450 monooxygenase ausG then modifies austinolide to austinol (By similarity). Austinol is further acetylated to austin by the O-acetyltransferase ausP, which spontaneously changes to dehydroaustin (PubMed:29076725). The cytochrome P450 monooxygenase then converts dehydroaustin is into 7-dehydrodehydroaustin (PubMed:29076725). The hydroxylation catalyzed by ausR permits the second O-acetyltransferase ausQ to add an additional acetyl group to the molecule, leading to the formation of acetoxydehydroaustin (PubMed:29076725). Due to genetic rearrangements of the clusters and the subsequent loss of some enzymes, the end product of the Penicillium brasilianum austinoid biosynthesis clusters is acetoxydehydroaustin (PubMed:29076725).</text>
</comment>
<comment type="pathway">
    <text evidence="8">Secondary metabolite biosynthesis; terpenoid biosynthesis.</text>
</comment>
<comment type="miscellaneous">
    <text evidence="8">In A.calidoustus, the austinoid gene cluster lies on a contiguous DNA region, while clusters from E.nidulans and P.brasilianum are split in their respective genomes. Genetic rearrangements provoked variability among the clusters and E.nidulans produces the least number of austionoid derivatives with the end products austinol and dehydroaustinol, while P.brasilianum can produce until acetoxydehydroaustin, and A.calidoustus produces the highest number of identified derivatives.</text>
</comment>
<comment type="similarity">
    <text evidence="7">Belongs to the short-chain dehydrogenases/reductases (SDR) family.</text>
</comment>